<accession>Q5HVR3</accession>
<organism>
    <name type="scientific">Campylobacter jejuni (strain RM1221)</name>
    <dbReference type="NCBI Taxonomy" id="195099"/>
    <lineage>
        <taxon>Bacteria</taxon>
        <taxon>Pseudomonadati</taxon>
        <taxon>Campylobacterota</taxon>
        <taxon>Epsilonproteobacteria</taxon>
        <taxon>Campylobacterales</taxon>
        <taxon>Campylobacteraceae</taxon>
        <taxon>Campylobacter</taxon>
    </lineage>
</organism>
<proteinExistence type="inferred from homology"/>
<protein>
    <recommendedName>
        <fullName evidence="1">Indole-3-glycerol phosphate synthase</fullName>
        <shortName evidence="1">IGPS</shortName>
        <ecNumber evidence="1">4.1.1.48</ecNumber>
    </recommendedName>
</protein>
<sequence length="258" mass="29573">MILDKIFEKTKEDLKERKLKLPYDMLGRSLASNPFFPKDVIKALKRVEKEVKIIAEVKKASPSKGVIREDFDPLSIALNYEKNKAAAISVLTEPHFFKGSLEYLSLIRRYTQIPLLRKDFIFDEYQILEALVYGADFVLLIAKMLSMKELKKLLEFARHLGLEALVEIHDKEDLSKAIFAGADIIGINHRNLEDFTMDMSLCEKLIPQIPNSKIIIAESGLENKEFLEHLQNLGVDAFLIGEYFMREKDEGKALKALL</sequence>
<reference key="1">
    <citation type="journal article" date="2005" name="PLoS Biol.">
        <title>Major structural differences and novel potential virulence mechanisms from the genomes of multiple Campylobacter species.</title>
        <authorList>
            <person name="Fouts D.E."/>
            <person name="Mongodin E.F."/>
            <person name="Mandrell R.E."/>
            <person name="Miller W.G."/>
            <person name="Rasko D.A."/>
            <person name="Ravel J."/>
            <person name="Brinkac L.M."/>
            <person name="DeBoy R.T."/>
            <person name="Parker C.T."/>
            <person name="Daugherty S.C."/>
            <person name="Dodson R.J."/>
            <person name="Durkin A.S."/>
            <person name="Madupu R."/>
            <person name="Sullivan S.A."/>
            <person name="Shetty J.U."/>
            <person name="Ayodeji M.A."/>
            <person name="Shvartsbeyn A."/>
            <person name="Schatz M.C."/>
            <person name="Badger J.H."/>
            <person name="Fraser C.M."/>
            <person name="Nelson K.E."/>
        </authorList>
    </citation>
    <scope>NUCLEOTIDE SEQUENCE [LARGE SCALE GENOMIC DNA]</scope>
    <source>
        <strain>RM1221</strain>
    </source>
</reference>
<name>TRPC_CAMJR</name>
<gene>
    <name evidence="1" type="primary">trpC</name>
    <name type="ordered locus">CJE0606</name>
</gene>
<comment type="catalytic activity">
    <reaction evidence="1">
        <text>1-(2-carboxyphenylamino)-1-deoxy-D-ribulose 5-phosphate + H(+) = (1S,2R)-1-C-(indol-3-yl)glycerol 3-phosphate + CO2 + H2O</text>
        <dbReference type="Rhea" id="RHEA:23476"/>
        <dbReference type="ChEBI" id="CHEBI:15377"/>
        <dbReference type="ChEBI" id="CHEBI:15378"/>
        <dbReference type="ChEBI" id="CHEBI:16526"/>
        <dbReference type="ChEBI" id="CHEBI:58613"/>
        <dbReference type="ChEBI" id="CHEBI:58866"/>
        <dbReference type="EC" id="4.1.1.48"/>
    </reaction>
</comment>
<comment type="pathway">
    <text evidence="1">Amino-acid biosynthesis; L-tryptophan biosynthesis; L-tryptophan from chorismate: step 4/5.</text>
</comment>
<comment type="similarity">
    <text evidence="1">Belongs to the TrpC family.</text>
</comment>
<keyword id="KW-0028">Amino-acid biosynthesis</keyword>
<keyword id="KW-0057">Aromatic amino acid biosynthesis</keyword>
<keyword id="KW-0210">Decarboxylase</keyword>
<keyword id="KW-0456">Lyase</keyword>
<keyword id="KW-0822">Tryptophan biosynthesis</keyword>
<dbReference type="EC" id="4.1.1.48" evidence="1"/>
<dbReference type="EMBL" id="CP000025">
    <property type="protein sequence ID" value="AAW35880.1"/>
    <property type="molecule type" value="Genomic_DNA"/>
</dbReference>
<dbReference type="RefSeq" id="WP_002854779.1">
    <property type="nucleotide sequence ID" value="NC_003912.7"/>
</dbReference>
<dbReference type="SMR" id="Q5HVR3"/>
<dbReference type="KEGG" id="cjr:CJE0606"/>
<dbReference type="HOGENOM" id="CLU_034247_2_0_7"/>
<dbReference type="UniPathway" id="UPA00035">
    <property type="reaction ID" value="UER00043"/>
</dbReference>
<dbReference type="GO" id="GO:0004425">
    <property type="term" value="F:indole-3-glycerol-phosphate synthase activity"/>
    <property type="evidence" value="ECO:0007669"/>
    <property type="project" value="UniProtKB-UniRule"/>
</dbReference>
<dbReference type="GO" id="GO:0004640">
    <property type="term" value="F:phosphoribosylanthranilate isomerase activity"/>
    <property type="evidence" value="ECO:0007669"/>
    <property type="project" value="TreeGrafter"/>
</dbReference>
<dbReference type="GO" id="GO:0000162">
    <property type="term" value="P:L-tryptophan biosynthetic process"/>
    <property type="evidence" value="ECO:0007669"/>
    <property type="project" value="UniProtKB-UniRule"/>
</dbReference>
<dbReference type="CDD" id="cd00331">
    <property type="entry name" value="IGPS"/>
    <property type="match status" value="1"/>
</dbReference>
<dbReference type="FunFam" id="3.20.20.70:FF:000024">
    <property type="entry name" value="Indole-3-glycerol phosphate synthase"/>
    <property type="match status" value="1"/>
</dbReference>
<dbReference type="Gene3D" id="3.20.20.70">
    <property type="entry name" value="Aldolase class I"/>
    <property type="match status" value="1"/>
</dbReference>
<dbReference type="HAMAP" id="MF_00134_A">
    <property type="entry name" value="IGPS_A"/>
    <property type="match status" value="1"/>
</dbReference>
<dbReference type="HAMAP" id="MF_00134_B">
    <property type="entry name" value="IGPS_B"/>
    <property type="match status" value="1"/>
</dbReference>
<dbReference type="InterPro" id="IPR013785">
    <property type="entry name" value="Aldolase_TIM"/>
</dbReference>
<dbReference type="InterPro" id="IPR045186">
    <property type="entry name" value="Indole-3-glycerol_P_synth"/>
</dbReference>
<dbReference type="InterPro" id="IPR013798">
    <property type="entry name" value="Indole-3-glycerol_P_synth_dom"/>
</dbReference>
<dbReference type="InterPro" id="IPR001468">
    <property type="entry name" value="Indole-3-GlycerolPSynthase_CS"/>
</dbReference>
<dbReference type="InterPro" id="IPR011060">
    <property type="entry name" value="RibuloseP-bd_barrel"/>
</dbReference>
<dbReference type="NCBIfam" id="NF001377">
    <property type="entry name" value="PRK00278.2-4"/>
    <property type="match status" value="1"/>
</dbReference>
<dbReference type="NCBIfam" id="NF001378">
    <property type="entry name" value="PRK00278.2-5"/>
    <property type="match status" value="1"/>
</dbReference>
<dbReference type="PANTHER" id="PTHR22854:SF2">
    <property type="entry name" value="INDOLE-3-GLYCEROL-PHOSPHATE SYNTHASE"/>
    <property type="match status" value="1"/>
</dbReference>
<dbReference type="PANTHER" id="PTHR22854">
    <property type="entry name" value="TRYPTOPHAN BIOSYNTHESIS PROTEIN"/>
    <property type="match status" value="1"/>
</dbReference>
<dbReference type="Pfam" id="PF00218">
    <property type="entry name" value="IGPS"/>
    <property type="match status" value="1"/>
</dbReference>
<dbReference type="SUPFAM" id="SSF51366">
    <property type="entry name" value="Ribulose-phoshate binding barrel"/>
    <property type="match status" value="1"/>
</dbReference>
<dbReference type="PROSITE" id="PS00614">
    <property type="entry name" value="IGPS"/>
    <property type="match status" value="1"/>
</dbReference>
<evidence type="ECO:0000255" key="1">
    <source>
        <dbReference type="HAMAP-Rule" id="MF_00134"/>
    </source>
</evidence>
<feature type="chain" id="PRO_0000154219" description="Indole-3-glycerol phosphate synthase">
    <location>
        <begin position="1"/>
        <end position="258"/>
    </location>
</feature>